<protein>
    <recommendedName>
        <fullName>Selection and upkeep of intraepithelial T-cells protein 4</fullName>
        <shortName>Skint-4</shortName>
    </recommendedName>
</protein>
<reference key="1">
    <citation type="journal article" date="2008" name="Nat. Genet.">
        <title>Skint1, the prototype of a newly identified immunoglobulin superfamily gene cluster, positively selects epidermal gammadelta T cells.</title>
        <authorList>
            <person name="Boyden L.M."/>
            <person name="Lewis J.M."/>
            <person name="Barbee S.D."/>
            <person name="Bas A."/>
            <person name="Girardi M."/>
            <person name="Hayday A.C."/>
            <person name="Tigelaar R.E."/>
            <person name="Lifton R.P."/>
        </authorList>
    </citation>
    <scope>NUCLEOTIDE SEQUENCE [MRNA] (ISOFORMS 1 AND 2)</scope>
    <scope>TISSUE SPECIFICITY</scope>
    <source>
        <strain>C57BL/6J</strain>
    </source>
</reference>
<dbReference type="EMBL" id="EF494897">
    <property type="protein sequence ID" value="ABS30719.1"/>
    <property type="molecule type" value="mRNA"/>
</dbReference>
<dbReference type="EMBL" id="EF494898">
    <property type="protein sequence ID" value="ABS30720.1"/>
    <property type="molecule type" value="mRNA"/>
</dbReference>
<dbReference type="CCDS" id="CCDS84779.1">
    <molecule id="A7TZF3-1"/>
</dbReference>
<dbReference type="RefSeq" id="NP_001334109.1">
    <molecule id="A7TZF3-1"/>
    <property type="nucleotide sequence ID" value="NM_001347180.1"/>
</dbReference>
<dbReference type="SMR" id="A7TZF3"/>
<dbReference type="FunCoup" id="A7TZF3">
    <property type="interactions" value="535"/>
</dbReference>
<dbReference type="STRING" id="10090.ENSMUSP00000102176"/>
<dbReference type="GlyCosmos" id="A7TZF3">
    <property type="glycosylation" value="2 sites, No reported glycans"/>
</dbReference>
<dbReference type="GlyGen" id="A7TZF3">
    <property type="glycosylation" value="2 sites"/>
</dbReference>
<dbReference type="PaxDb" id="10090-ENSMUSP00000102176"/>
<dbReference type="DNASU" id="320640"/>
<dbReference type="Ensembl" id="ENSMUST00000069769.9">
    <molecule id="A7TZF3-1"/>
    <property type="protein sequence ID" value="ENSMUSP00000070676.3"/>
    <property type="gene ID" value="ENSMUSG00000055960.13"/>
</dbReference>
<dbReference type="Ensembl" id="ENSMUST00000106564.8">
    <molecule id="A7TZF3-1"/>
    <property type="protein sequence ID" value="ENSMUSP00000102174.2"/>
    <property type="gene ID" value="ENSMUSG00000055960.13"/>
</dbReference>
<dbReference type="Ensembl" id="ENSMUST00000106565.8">
    <molecule id="A7TZF3-1"/>
    <property type="protein sequence ID" value="ENSMUSP00000102175.2"/>
    <property type="gene ID" value="ENSMUSG00000055960.13"/>
</dbReference>
<dbReference type="GeneID" id="320640"/>
<dbReference type="KEGG" id="mmu:320640"/>
<dbReference type="UCSC" id="uc008udr.1">
    <molecule id="A7TZF3-1"/>
    <property type="organism name" value="mouse"/>
</dbReference>
<dbReference type="UCSC" id="uc012diq.1">
    <molecule id="A7TZF3-2"/>
    <property type="organism name" value="mouse"/>
</dbReference>
<dbReference type="AGR" id="MGI:2444425"/>
<dbReference type="CTD" id="320640"/>
<dbReference type="MGI" id="MGI:2444425">
    <property type="gene designation" value="Skint4"/>
</dbReference>
<dbReference type="VEuPathDB" id="HostDB:ENSMUSG00000055960"/>
<dbReference type="eggNOG" id="ENOG502SEQH">
    <property type="taxonomic scope" value="Eukaryota"/>
</dbReference>
<dbReference type="GeneTree" id="ENSGT00940000162562"/>
<dbReference type="HOGENOM" id="CLU_013137_8_7_1"/>
<dbReference type="InParanoid" id="A7TZF3"/>
<dbReference type="OrthoDB" id="9986391at2759"/>
<dbReference type="PhylomeDB" id="A7TZF3"/>
<dbReference type="BioGRID-ORCS" id="320640">
    <property type="hits" value="0 hits in 76 CRISPR screens"/>
</dbReference>
<dbReference type="ChiTaRS" id="Skint4">
    <property type="organism name" value="mouse"/>
</dbReference>
<dbReference type="PRO" id="PR:A7TZF3"/>
<dbReference type="Proteomes" id="UP000000589">
    <property type="component" value="Chromosome 4"/>
</dbReference>
<dbReference type="RNAct" id="A7TZF3">
    <property type="molecule type" value="protein"/>
</dbReference>
<dbReference type="Bgee" id="ENSMUSG00000055960">
    <property type="expression patterns" value="Expressed in zone of skin and 20 other cell types or tissues"/>
</dbReference>
<dbReference type="ExpressionAtlas" id="A7TZF3">
    <property type="expression patterns" value="baseline and differential"/>
</dbReference>
<dbReference type="GO" id="GO:0016020">
    <property type="term" value="C:membrane"/>
    <property type="evidence" value="ECO:0007669"/>
    <property type="project" value="UniProtKB-SubCell"/>
</dbReference>
<dbReference type="CDD" id="cd05713">
    <property type="entry name" value="IgV_MOG_like"/>
    <property type="match status" value="1"/>
</dbReference>
<dbReference type="FunFam" id="2.60.40.10:FF:000088">
    <property type="entry name" value="Butyrophilin subfamily 1 member A1"/>
    <property type="match status" value="1"/>
</dbReference>
<dbReference type="FunFam" id="2.60.40.10:FF:000208">
    <property type="entry name" value="Butyrophilin subfamily 1 member A1"/>
    <property type="match status" value="1"/>
</dbReference>
<dbReference type="Gene3D" id="2.60.40.10">
    <property type="entry name" value="Immunoglobulins"/>
    <property type="match status" value="2"/>
</dbReference>
<dbReference type="InterPro" id="IPR053896">
    <property type="entry name" value="BTN3A2-like_Ig-C"/>
</dbReference>
<dbReference type="InterPro" id="IPR007110">
    <property type="entry name" value="Ig-like_dom"/>
</dbReference>
<dbReference type="InterPro" id="IPR036179">
    <property type="entry name" value="Ig-like_dom_sf"/>
</dbReference>
<dbReference type="InterPro" id="IPR013783">
    <property type="entry name" value="Ig-like_fold"/>
</dbReference>
<dbReference type="InterPro" id="IPR003599">
    <property type="entry name" value="Ig_sub"/>
</dbReference>
<dbReference type="InterPro" id="IPR013106">
    <property type="entry name" value="Ig_V-set"/>
</dbReference>
<dbReference type="InterPro" id="IPR050504">
    <property type="entry name" value="IgSF_BTN/MOG"/>
</dbReference>
<dbReference type="PANTHER" id="PTHR24100">
    <property type="entry name" value="BUTYROPHILIN"/>
    <property type="match status" value="1"/>
</dbReference>
<dbReference type="PANTHER" id="PTHR24100:SF102">
    <property type="entry name" value="SELECTION AND UPKEEP OF INTRAEPITHELIAL T-CELLS PROTEIN 2-RELATED"/>
    <property type="match status" value="1"/>
</dbReference>
<dbReference type="Pfam" id="PF22705">
    <property type="entry name" value="C2-set_3"/>
    <property type="match status" value="1"/>
</dbReference>
<dbReference type="Pfam" id="PF07686">
    <property type="entry name" value="V-set"/>
    <property type="match status" value="1"/>
</dbReference>
<dbReference type="SMART" id="SM00409">
    <property type="entry name" value="IG"/>
    <property type="match status" value="1"/>
</dbReference>
<dbReference type="SMART" id="SM00406">
    <property type="entry name" value="IGv"/>
    <property type="match status" value="1"/>
</dbReference>
<dbReference type="SUPFAM" id="SSF48726">
    <property type="entry name" value="Immunoglobulin"/>
    <property type="match status" value="2"/>
</dbReference>
<dbReference type="PROSITE" id="PS50835">
    <property type="entry name" value="IG_LIKE"/>
    <property type="match status" value="1"/>
</dbReference>
<gene>
    <name type="primary">Skint4</name>
</gene>
<keyword id="KW-0025">Alternative splicing</keyword>
<keyword id="KW-1015">Disulfide bond</keyword>
<keyword id="KW-0325">Glycoprotein</keyword>
<keyword id="KW-0393">Immunoglobulin domain</keyword>
<keyword id="KW-0472">Membrane</keyword>
<keyword id="KW-1185">Reference proteome</keyword>
<keyword id="KW-0677">Repeat</keyword>
<keyword id="KW-0732">Signal</keyword>
<keyword id="KW-0812">Transmembrane</keyword>
<keyword id="KW-1133">Transmembrane helix</keyword>
<comment type="function">
    <text evidence="1">May act by engaging a cell surface molecule on immature T-cells in the embryonic thymus.</text>
</comment>
<comment type="subcellular location">
    <subcellularLocation>
        <location evidence="6">Membrane</location>
        <topology evidence="6">Multi-pass membrane protein</topology>
    </subcellularLocation>
</comment>
<comment type="alternative products">
    <event type="alternative splicing"/>
    <isoform>
        <id>A7TZF3-1</id>
        <name>1</name>
        <name>A</name>
        <sequence type="displayed"/>
    </isoform>
    <isoform>
        <id>A7TZF3-2</id>
        <name>2</name>
        <name>B</name>
        <sequence type="described" ref="VSP_034882"/>
    </isoform>
</comment>
<comment type="tissue specificity">
    <text evidence="4">Expressed in skin, thymus and, to a lower extent, bladder and testis.</text>
</comment>
<comment type="miscellaneous">
    <text>Encoded by one of the 11 copies of Skint genes clustered in the D1 region of the chromosome 4.</text>
</comment>
<comment type="similarity">
    <text evidence="6">Belongs to the SKINT family.</text>
</comment>
<proteinExistence type="evidence at transcript level"/>
<organism>
    <name type="scientific">Mus musculus</name>
    <name type="common">Mouse</name>
    <dbReference type="NCBI Taxonomy" id="10090"/>
    <lineage>
        <taxon>Eukaryota</taxon>
        <taxon>Metazoa</taxon>
        <taxon>Chordata</taxon>
        <taxon>Craniata</taxon>
        <taxon>Vertebrata</taxon>
        <taxon>Euteleostomi</taxon>
        <taxon>Mammalia</taxon>
        <taxon>Eutheria</taxon>
        <taxon>Euarchontoglires</taxon>
        <taxon>Glires</taxon>
        <taxon>Rodentia</taxon>
        <taxon>Myomorpha</taxon>
        <taxon>Muroidea</taxon>
        <taxon>Muridae</taxon>
        <taxon>Murinae</taxon>
        <taxon>Mus</taxon>
        <taxon>Mus</taxon>
    </lineage>
</organism>
<accession>A7TZF3</accession>
<accession>A7TZF4</accession>
<sequence>MGATEVLTSYCVVLCLLQMVALSSGHFTVIGSQRPILATLGGNVELNCQLSPPQQAQHMEIRWFRNRYTQPVHLYRNGKNLHGETMSKYVERTELLTDAFNEGKVILRILNVTVDDGGAYHCVFKDGEFYEEHITEVKVTATSSDIQILMHTPNIKGVMLECHSGGWFPQPHMEWRNSKGEVIQATSKFHSQDKNKLFNMSMVLFIEASSHRNVICYFQNLVTHQEQSINIVLSGELFSWKIVWIMILSTISFVMIDFCMTYCVQQQLIHEESLSTVDNDQCESDQSEGTCYKRNYPWIIIAVVPIISVFAIIGVMLFLHLEQRVTILEQHFELDTLWLEDISVILCVVIVSNINLIPLIYFRLHEHVPRFKDRSPILNKAVVFLHFIYFSIVCGTILLVHLQLRNKVSISDSLFSLYNSWLTDISMILGFLLSIFIVTTIAKSSLFNKKWCIGLCIHMKEAEATGGPCEGEEL</sequence>
<feature type="signal peptide" evidence="2">
    <location>
        <begin position="1"/>
        <end position="25"/>
    </location>
</feature>
<feature type="chain" id="PRO_5000270108" description="Selection and upkeep of intraepithelial T-cells protein 4">
    <location>
        <begin position="26"/>
        <end position="474"/>
    </location>
</feature>
<feature type="topological domain" description="Extracellular" evidence="2">
    <location>
        <begin position="26"/>
        <end position="241"/>
    </location>
</feature>
<feature type="transmembrane region" description="Helical" evidence="2">
    <location>
        <begin position="242"/>
        <end position="262"/>
    </location>
</feature>
<feature type="topological domain" description="Cytoplasmic" evidence="2">
    <location>
        <begin position="263"/>
        <end position="298"/>
    </location>
</feature>
<feature type="transmembrane region" description="Helical" evidence="2">
    <location>
        <begin position="299"/>
        <end position="319"/>
    </location>
</feature>
<feature type="topological domain" description="Extracellular" evidence="2">
    <location>
        <begin position="320"/>
        <end position="341"/>
    </location>
</feature>
<feature type="transmembrane region" description="Helical" evidence="2">
    <location>
        <begin position="342"/>
        <end position="362"/>
    </location>
</feature>
<feature type="topological domain" description="Cytoplasmic" evidence="2">
    <location>
        <begin position="363"/>
        <end position="381"/>
    </location>
</feature>
<feature type="transmembrane region" description="Helical" evidence="2">
    <location>
        <begin position="382"/>
        <end position="402"/>
    </location>
</feature>
<feature type="topological domain" description="Extracellular" evidence="2">
    <location>
        <begin position="403"/>
        <end position="420"/>
    </location>
</feature>
<feature type="transmembrane region" description="Helical" evidence="2">
    <location>
        <begin position="421"/>
        <end position="441"/>
    </location>
</feature>
<feature type="topological domain" description="Cytoplasmic" evidence="2">
    <location>
        <begin position="442"/>
        <end position="474"/>
    </location>
</feature>
<feature type="domain" description="Ig-like V-type">
    <location>
        <begin position="27"/>
        <end position="140"/>
    </location>
</feature>
<feature type="domain" description="Ig-like C1-type">
    <location>
        <begin position="141"/>
        <end position="234"/>
    </location>
</feature>
<feature type="glycosylation site" description="N-linked (GlcNAc...) asparagine" evidence="2">
    <location>
        <position position="111"/>
    </location>
</feature>
<feature type="glycosylation site" description="N-linked (GlcNAc...) asparagine" evidence="2">
    <location>
        <position position="199"/>
    </location>
</feature>
<feature type="disulfide bond" evidence="3">
    <location>
        <begin position="48"/>
        <end position="122"/>
    </location>
</feature>
<feature type="disulfide bond" evidence="3">
    <location>
        <begin position="162"/>
        <end position="216"/>
    </location>
</feature>
<feature type="splice variant" id="VSP_034882" description="In isoform 2." evidence="5">
    <location>
        <begin position="326"/>
        <end position="408"/>
    </location>
</feature>
<name>SKIT4_MOUSE</name>
<evidence type="ECO:0000250" key="1"/>
<evidence type="ECO:0000255" key="2"/>
<evidence type="ECO:0000255" key="3">
    <source>
        <dbReference type="PROSITE-ProRule" id="PRU00114"/>
    </source>
</evidence>
<evidence type="ECO:0000269" key="4">
    <source>
    </source>
</evidence>
<evidence type="ECO:0000303" key="5">
    <source>
    </source>
</evidence>
<evidence type="ECO:0000305" key="6"/>